<dbReference type="EMBL" id="CU928145">
    <property type="protein sequence ID" value="CAU97616.1"/>
    <property type="molecule type" value="Genomic_DNA"/>
</dbReference>
<dbReference type="RefSeq" id="WP_001342195.1">
    <property type="nucleotide sequence ID" value="NC_011748.1"/>
</dbReference>
<dbReference type="GeneID" id="75204440"/>
<dbReference type="KEGG" id="eck:EC55989_1762"/>
<dbReference type="HOGENOM" id="CLU_102486_2_0_6"/>
<dbReference type="Proteomes" id="UP000000746">
    <property type="component" value="Chromosome"/>
</dbReference>
<dbReference type="GO" id="GO:0042597">
    <property type="term" value="C:periplasmic space"/>
    <property type="evidence" value="ECO:0007669"/>
    <property type="project" value="UniProtKB-SubCell"/>
</dbReference>
<dbReference type="HAMAP" id="MF_00546">
    <property type="entry name" value="Asr"/>
    <property type="match status" value="1"/>
</dbReference>
<dbReference type="InterPro" id="IPR023497">
    <property type="entry name" value="Acid_shock"/>
</dbReference>
<dbReference type="NCBIfam" id="NF033636">
    <property type="entry name" value="acid_shock_Asr"/>
    <property type="match status" value="1"/>
</dbReference>
<dbReference type="Pfam" id="PF06392">
    <property type="entry name" value="Asr"/>
    <property type="match status" value="1"/>
</dbReference>
<reference key="1">
    <citation type="journal article" date="2009" name="PLoS Genet.">
        <title>Organised genome dynamics in the Escherichia coli species results in highly diverse adaptive paths.</title>
        <authorList>
            <person name="Touchon M."/>
            <person name="Hoede C."/>
            <person name="Tenaillon O."/>
            <person name="Barbe V."/>
            <person name="Baeriswyl S."/>
            <person name="Bidet P."/>
            <person name="Bingen E."/>
            <person name="Bonacorsi S."/>
            <person name="Bouchier C."/>
            <person name="Bouvet O."/>
            <person name="Calteau A."/>
            <person name="Chiapello H."/>
            <person name="Clermont O."/>
            <person name="Cruveiller S."/>
            <person name="Danchin A."/>
            <person name="Diard M."/>
            <person name="Dossat C."/>
            <person name="Karoui M.E."/>
            <person name="Frapy E."/>
            <person name="Garry L."/>
            <person name="Ghigo J.M."/>
            <person name="Gilles A.M."/>
            <person name="Johnson J."/>
            <person name="Le Bouguenec C."/>
            <person name="Lescat M."/>
            <person name="Mangenot S."/>
            <person name="Martinez-Jehanne V."/>
            <person name="Matic I."/>
            <person name="Nassif X."/>
            <person name="Oztas S."/>
            <person name="Petit M.A."/>
            <person name="Pichon C."/>
            <person name="Rouy Z."/>
            <person name="Ruf C.S."/>
            <person name="Schneider D."/>
            <person name="Tourret J."/>
            <person name="Vacherie B."/>
            <person name="Vallenet D."/>
            <person name="Medigue C."/>
            <person name="Rocha E.P.C."/>
            <person name="Denamur E."/>
        </authorList>
    </citation>
    <scope>NUCLEOTIDE SEQUENCE [LARGE SCALE GENOMIC DNA]</scope>
    <source>
        <strain>55989 / EAEC</strain>
    </source>
</reference>
<evidence type="ECO:0000255" key="1">
    <source>
        <dbReference type="HAMAP-Rule" id="MF_00546"/>
    </source>
</evidence>
<evidence type="ECO:0000256" key="2">
    <source>
        <dbReference type="SAM" id="MobiDB-lite"/>
    </source>
</evidence>
<gene>
    <name evidence="1" type="primary">asr</name>
    <name type="ordered locus">EC55989_1762</name>
</gene>
<proteinExistence type="inferred from homology"/>
<keyword id="KW-0574">Periplasm</keyword>
<keyword id="KW-1185">Reference proteome</keyword>
<keyword id="KW-0732">Signal</keyword>
<feature type="signal peptide" evidence="1">
    <location>
        <begin position="1"/>
        <end position="21"/>
    </location>
</feature>
<feature type="propeptide" id="PRO_1000146599" evidence="1">
    <location>
        <begin position="22"/>
        <end position="58"/>
    </location>
</feature>
<feature type="chain" id="PRO_1000146600" description="Acid shock protein">
    <location>
        <begin position="59"/>
        <end position="102"/>
    </location>
</feature>
<feature type="region of interest" description="Disordered" evidence="2">
    <location>
        <begin position="22"/>
        <end position="102"/>
    </location>
</feature>
<feature type="compositionally biased region" description="Low complexity" evidence="2">
    <location>
        <begin position="22"/>
        <end position="41"/>
    </location>
</feature>
<feature type="compositionally biased region" description="Basic residues" evidence="2">
    <location>
        <begin position="80"/>
        <end position="90"/>
    </location>
</feature>
<feature type="compositionally biased region" description="Low complexity" evidence="2">
    <location>
        <begin position="91"/>
        <end position="102"/>
    </location>
</feature>
<accession>B7L5E9</accession>
<comment type="function">
    <text evidence="1">Required for growth and/or survival at acidic conditions.</text>
</comment>
<comment type="subcellular location">
    <subcellularLocation>
        <location evidence="1">Periplasm</location>
    </subcellularLocation>
</comment>
<comment type="PTM">
    <text evidence="1">Proteolytic processing gives rise to the active protein.</text>
</comment>
<comment type="similarity">
    <text evidence="1">Belongs to the Asr family.</text>
</comment>
<name>ASR_ECO55</name>
<protein>
    <recommendedName>
        <fullName evidence="1">Acid shock protein</fullName>
    </recommendedName>
</protein>
<sequence>MKKVLALVVAAAMGLSSAAFAAETATTPAPTATTTKAAPAKTTHHKKQHKAAPAQKAQAAKKHHKNTKAEQKAPEQKAQAAKKHAGKHSHQQPAKPAAQPAA</sequence>
<organism>
    <name type="scientific">Escherichia coli (strain 55989 / EAEC)</name>
    <dbReference type="NCBI Taxonomy" id="585055"/>
    <lineage>
        <taxon>Bacteria</taxon>
        <taxon>Pseudomonadati</taxon>
        <taxon>Pseudomonadota</taxon>
        <taxon>Gammaproteobacteria</taxon>
        <taxon>Enterobacterales</taxon>
        <taxon>Enterobacteriaceae</taxon>
        <taxon>Escherichia</taxon>
    </lineage>
</organism>